<gene>
    <name evidence="1" type="primary">hutU</name>
    <name type="ordered locus">SCO3073</name>
    <name type="ORF">SCE25.14c</name>
</gene>
<comment type="function">
    <text evidence="1">Catalyzes the conversion of urocanate to 4-imidazolone-5-propionate.</text>
</comment>
<comment type="catalytic activity">
    <reaction evidence="1">
        <text>4-imidazolone-5-propanoate = trans-urocanate + H2O</text>
        <dbReference type="Rhea" id="RHEA:13101"/>
        <dbReference type="ChEBI" id="CHEBI:15377"/>
        <dbReference type="ChEBI" id="CHEBI:17771"/>
        <dbReference type="ChEBI" id="CHEBI:77893"/>
        <dbReference type="EC" id="4.2.1.49"/>
    </reaction>
</comment>
<comment type="cofactor">
    <cofactor evidence="1">
        <name>NAD(+)</name>
        <dbReference type="ChEBI" id="CHEBI:57540"/>
    </cofactor>
    <text evidence="1">Binds 1 NAD(+) per subunit.</text>
</comment>
<comment type="pathway">
    <text evidence="1">Amino-acid degradation; L-histidine degradation into L-glutamate; N-formimidoyl-L-glutamate from L-histidine: step 2/3.</text>
</comment>
<comment type="subcellular location">
    <subcellularLocation>
        <location evidence="1">Cytoplasm</location>
    </subcellularLocation>
</comment>
<comment type="similarity">
    <text evidence="1">Belongs to the urocanase family.</text>
</comment>
<reference key="1">
    <citation type="journal article" date="2002" name="Nature">
        <title>Complete genome sequence of the model actinomycete Streptomyces coelicolor A3(2).</title>
        <authorList>
            <person name="Bentley S.D."/>
            <person name="Chater K.F."/>
            <person name="Cerdeno-Tarraga A.-M."/>
            <person name="Challis G.L."/>
            <person name="Thomson N.R."/>
            <person name="James K.D."/>
            <person name="Harris D.E."/>
            <person name="Quail M.A."/>
            <person name="Kieser H."/>
            <person name="Harper D."/>
            <person name="Bateman A."/>
            <person name="Brown S."/>
            <person name="Chandra G."/>
            <person name="Chen C.W."/>
            <person name="Collins M."/>
            <person name="Cronin A."/>
            <person name="Fraser A."/>
            <person name="Goble A."/>
            <person name="Hidalgo J."/>
            <person name="Hornsby T."/>
            <person name="Howarth S."/>
            <person name="Huang C.-H."/>
            <person name="Kieser T."/>
            <person name="Larke L."/>
            <person name="Murphy L.D."/>
            <person name="Oliver K."/>
            <person name="O'Neil S."/>
            <person name="Rabbinowitsch E."/>
            <person name="Rajandream M.A."/>
            <person name="Rutherford K.M."/>
            <person name="Rutter S."/>
            <person name="Seeger K."/>
            <person name="Saunders D."/>
            <person name="Sharp S."/>
            <person name="Squares R."/>
            <person name="Squares S."/>
            <person name="Taylor K."/>
            <person name="Warren T."/>
            <person name="Wietzorrek A."/>
            <person name="Woodward J.R."/>
            <person name="Barrell B.G."/>
            <person name="Parkhill J."/>
            <person name="Hopwood D.A."/>
        </authorList>
    </citation>
    <scope>NUCLEOTIDE SEQUENCE [LARGE SCALE GENOMIC DNA]</scope>
    <source>
        <strain>ATCC BAA-471 / A3(2) / M145</strain>
    </source>
</reference>
<keyword id="KW-0963">Cytoplasm</keyword>
<keyword id="KW-0369">Histidine metabolism</keyword>
<keyword id="KW-0456">Lyase</keyword>
<keyword id="KW-0520">NAD</keyword>
<keyword id="KW-1185">Reference proteome</keyword>
<evidence type="ECO:0000255" key="1">
    <source>
        <dbReference type="HAMAP-Rule" id="MF_00577"/>
    </source>
</evidence>
<evidence type="ECO:0000256" key="2">
    <source>
        <dbReference type="SAM" id="MobiDB-lite"/>
    </source>
</evidence>
<feature type="chain" id="PRO_0000207361" description="Urocanate hydratase">
    <location>
        <begin position="1"/>
        <end position="572"/>
    </location>
</feature>
<feature type="region of interest" description="Disordered" evidence="2">
    <location>
        <begin position="550"/>
        <end position="572"/>
    </location>
</feature>
<feature type="compositionally biased region" description="Basic and acidic residues" evidence="2">
    <location>
        <begin position="550"/>
        <end position="559"/>
    </location>
</feature>
<feature type="active site" evidence="1">
    <location>
        <position position="405"/>
    </location>
</feature>
<feature type="binding site" evidence="1">
    <location>
        <begin position="48"/>
        <end position="49"/>
    </location>
    <ligand>
        <name>NAD(+)</name>
        <dbReference type="ChEBI" id="CHEBI:57540"/>
    </ligand>
</feature>
<feature type="binding site" evidence="1">
    <location>
        <position position="126"/>
    </location>
    <ligand>
        <name>NAD(+)</name>
        <dbReference type="ChEBI" id="CHEBI:57540"/>
    </ligand>
</feature>
<feature type="binding site" evidence="1">
    <location>
        <begin position="172"/>
        <end position="174"/>
    </location>
    <ligand>
        <name>NAD(+)</name>
        <dbReference type="ChEBI" id="CHEBI:57540"/>
    </ligand>
</feature>
<feature type="binding site" evidence="1">
    <location>
        <position position="192"/>
    </location>
    <ligand>
        <name>NAD(+)</name>
        <dbReference type="ChEBI" id="CHEBI:57540"/>
    </ligand>
</feature>
<feature type="binding site" evidence="1">
    <location>
        <begin position="238"/>
        <end position="239"/>
    </location>
    <ligand>
        <name>NAD(+)</name>
        <dbReference type="ChEBI" id="CHEBI:57540"/>
    </ligand>
</feature>
<feature type="binding site" evidence="1">
    <location>
        <begin position="259"/>
        <end position="263"/>
    </location>
    <ligand>
        <name>NAD(+)</name>
        <dbReference type="ChEBI" id="CHEBI:57540"/>
    </ligand>
</feature>
<feature type="binding site" evidence="1">
    <location>
        <begin position="268"/>
        <end position="269"/>
    </location>
    <ligand>
        <name>NAD(+)</name>
        <dbReference type="ChEBI" id="CHEBI:57540"/>
    </ligand>
</feature>
<feature type="binding site" evidence="1">
    <location>
        <position position="317"/>
    </location>
    <ligand>
        <name>NAD(+)</name>
        <dbReference type="ChEBI" id="CHEBI:57540"/>
    </ligand>
</feature>
<feature type="binding site" evidence="1">
    <location>
        <position position="487"/>
    </location>
    <ligand>
        <name>NAD(+)</name>
        <dbReference type="ChEBI" id="CHEBI:57540"/>
    </ligand>
</feature>
<protein>
    <recommendedName>
        <fullName evidence="1">Urocanate hydratase</fullName>
        <shortName evidence="1">Urocanase</shortName>
        <ecNumber evidence="1">4.2.1.49</ecNumber>
    </recommendedName>
    <alternativeName>
        <fullName evidence="1">Imidazolonepropionate hydrolase</fullName>
    </alternativeName>
</protein>
<accession>Q9KZ75</accession>
<organism>
    <name type="scientific">Streptomyces coelicolor (strain ATCC BAA-471 / A3(2) / M145)</name>
    <dbReference type="NCBI Taxonomy" id="100226"/>
    <lineage>
        <taxon>Bacteria</taxon>
        <taxon>Bacillati</taxon>
        <taxon>Actinomycetota</taxon>
        <taxon>Actinomycetes</taxon>
        <taxon>Kitasatosporales</taxon>
        <taxon>Streptomycetaceae</taxon>
        <taxon>Streptomyces</taxon>
        <taxon>Streptomyces albidoflavus group</taxon>
    </lineage>
</organism>
<proteinExistence type="inferred from homology"/>
<sequence length="572" mass="61262">MSGPRPVRAPRGTEPSALGWQQEAALRMLQNNLDPEVAEHPDKLVVYGGTGKAARDWRSFDAMVRTLRTLKQDETMLVQSGRPVGVMQTHEWAPRVLIANSNLVGDWANWEEFRRLEALGLTMYGQMTAGSWIYIGTQGILQGTYETFAAVAAKKFGGTLAGTITLTAGLGGMGGAQPLAVTMNDGVVICVDCDPRAIDRRIEHHYLDVKADSLDHALQLATEARDRRKPLSIGVLGNAAELVPQLLAMGAPIDIVTDQTSAHDPLAYLPTGIAFEDMADAAAKDPAGFTTRARESMARHVEAMVGFQDAGAEVFDYGNSIRGEAQLAGYDRAFAFPGFVPAYIRPLFCEGKGPFRWAALSGDPADIAKTDKAILDLFPENESLARWIKMAGERVHFQGLPARICWLGYGERDKAGERFNDMVASGELAAPIVIGRDHLDCGSVASPYRETEAMLDGSDAIADWPLLNAMVNVASGASWVSLHHGGGVGMGRSIHAGQVTVADGTPLAGEKIRRVLTNDPGMGVIRHVDAGYDIAESVAAERDVRVPMREGDEAHEGDAAHGSGAAREGDGV</sequence>
<name>HUTU_STRCO</name>
<dbReference type="EC" id="4.2.1.49" evidence="1"/>
<dbReference type="EMBL" id="AL939115">
    <property type="protein sequence ID" value="CAB89445.1"/>
    <property type="molecule type" value="Genomic_DNA"/>
</dbReference>
<dbReference type="RefSeq" id="NP_627293.1">
    <property type="nucleotide sequence ID" value="NC_003888.3"/>
</dbReference>
<dbReference type="RefSeq" id="WP_011028751.1">
    <property type="nucleotide sequence ID" value="NZ_VNID01000013.1"/>
</dbReference>
<dbReference type="SMR" id="Q9KZ75"/>
<dbReference type="STRING" id="100226.gene:17760688"/>
<dbReference type="PaxDb" id="100226-SCO3073"/>
<dbReference type="KEGG" id="sco:SCO3073"/>
<dbReference type="PATRIC" id="fig|100226.15.peg.3133"/>
<dbReference type="eggNOG" id="COG2987">
    <property type="taxonomic scope" value="Bacteria"/>
</dbReference>
<dbReference type="HOGENOM" id="CLU_018868_0_1_11"/>
<dbReference type="InParanoid" id="Q9KZ75"/>
<dbReference type="OrthoDB" id="9764874at2"/>
<dbReference type="PhylomeDB" id="Q9KZ75"/>
<dbReference type="UniPathway" id="UPA00379">
    <property type="reaction ID" value="UER00550"/>
</dbReference>
<dbReference type="Proteomes" id="UP000001973">
    <property type="component" value="Chromosome"/>
</dbReference>
<dbReference type="GO" id="GO:0005737">
    <property type="term" value="C:cytoplasm"/>
    <property type="evidence" value="ECO:0007669"/>
    <property type="project" value="UniProtKB-SubCell"/>
</dbReference>
<dbReference type="GO" id="GO:0016153">
    <property type="term" value="F:urocanate hydratase activity"/>
    <property type="evidence" value="ECO:0000318"/>
    <property type="project" value="GO_Central"/>
</dbReference>
<dbReference type="GO" id="GO:0006548">
    <property type="term" value="P:L-histidine catabolic process"/>
    <property type="evidence" value="ECO:0000318"/>
    <property type="project" value="GO_Central"/>
</dbReference>
<dbReference type="GO" id="GO:0019556">
    <property type="term" value="P:L-histidine catabolic process to glutamate and formamide"/>
    <property type="evidence" value="ECO:0007669"/>
    <property type="project" value="UniProtKB-UniPathway"/>
</dbReference>
<dbReference type="GO" id="GO:0019557">
    <property type="term" value="P:L-histidine catabolic process to glutamate and formate"/>
    <property type="evidence" value="ECO:0007669"/>
    <property type="project" value="UniProtKB-UniPathway"/>
</dbReference>
<dbReference type="FunFam" id="3.40.50.10730:FF:000001">
    <property type="entry name" value="Urocanate hydratase"/>
    <property type="match status" value="1"/>
</dbReference>
<dbReference type="Gene3D" id="3.40.50.10730">
    <property type="entry name" value="Urocanase like domains"/>
    <property type="match status" value="1"/>
</dbReference>
<dbReference type="Gene3D" id="3.40.1770.10">
    <property type="entry name" value="Urocanase superfamily"/>
    <property type="match status" value="1"/>
</dbReference>
<dbReference type="HAMAP" id="MF_00577">
    <property type="entry name" value="HutU"/>
    <property type="match status" value="1"/>
</dbReference>
<dbReference type="InterPro" id="IPR055351">
    <property type="entry name" value="Urocanase"/>
</dbReference>
<dbReference type="InterPro" id="IPR023637">
    <property type="entry name" value="Urocanase-like"/>
</dbReference>
<dbReference type="InterPro" id="IPR035401">
    <property type="entry name" value="Urocanase_C"/>
</dbReference>
<dbReference type="InterPro" id="IPR038364">
    <property type="entry name" value="Urocanase_central_sf"/>
</dbReference>
<dbReference type="InterPro" id="IPR023636">
    <property type="entry name" value="Urocanase_CS"/>
</dbReference>
<dbReference type="InterPro" id="IPR035400">
    <property type="entry name" value="Urocanase_N"/>
</dbReference>
<dbReference type="InterPro" id="IPR035085">
    <property type="entry name" value="Urocanase_Rossmann-like"/>
</dbReference>
<dbReference type="InterPro" id="IPR036190">
    <property type="entry name" value="Urocanase_sf"/>
</dbReference>
<dbReference type="NCBIfam" id="TIGR01228">
    <property type="entry name" value="hutU"/>
    <property type="match status" value="1"/>
</dbReference>
<dbReference type="NCBIfam" id="NF003820">
    <property type="entry name" value="PRK05414.1"/>
    <property type="match status" value="1"/>
</dbReference>
<dbReference type="PANTHER" id="PTHR12216">
    <property type="entry name" value="UROCANATE HYDRATASE"/>
    <property type="match status" value="1"/>
</dbReference>
<dbReference type="PANTHER" id="PTHR12216:SF4">
    <property type="entry name" value="UROCANATE HYDRATASE"/>
    <property type="match status" value="1"/>
</dbReference>
<dbReference type="Pfam" id="PF01175">
    <property type="entry name" value="Urocanase"/>
    <property type="match status" value="1"/>
</dbReference>
<dbReference type="Pfam" id="PF17392">
    <property type="entry name" value="Urocanase_C"/>
    <property type="match status" value="1"/>
</dbReference>
<dbReference type="Pfam" id="PF17391">
    <property type="entry name" value="Urocanase_N"/>
    <property type="match status" value="1"/>
</dbReference>
<dbReference type="PIRSF" id="PIRSF001423">
    <property type="entry name" value="Urocanate_hydrat"/>
    <property type="match status" value="1"/>
</dbReference>
<dbReference type="SUPFAM" id="SSF111326">
    <property type="entry name" value="Urocanase"/>
    <property type="match status" value="1"/>
</dbReference>
<dbReference type="PROSITE" id="PS01233">
    <property type="entry name" value="UROCANASE"/>
    <property type="match status" value="1"/>
</dbReference>